<accession>Q9Z7D3</accession>
<accession>Q9JQB3</accession>
<keyword id="KW-0963">Cytoplasm</keyword>
<keyword id="KW-0227">DNA damage</keyword>
<keyword id="KW-0234">DNA repair</keyword>
<keyword id="KW-0378">Hydrolase</keyword>
<evidence type="ECO:0000250" key="1"/>
<evidence type="ECO:0000305" key="2"/>
<proteinExistence type="inferred from homology"/>
<gene>
    <name type="primary">ung</name>
    <name type="ordered locus">CPn_0773</name>
    <name type="ordered locus">CP_1099</name>
    <name type="ordered locus">CpB0801</name>
</gene>
<reference key="1">
    <citation type="journal article" date="1999" name="Nat. Genet.">
        <title>Comparative genomes of Chlamydia pneumoniae and C. trachomatis.</title>
        <authorList>
            <person name="Kalman S."/>
            <person name="Mitchell W.P."/>
            <person name="Marathe R."/>
            <person name="Lammel C.J."/>
            <person name="Fan J."/>
            <person name="Hyman R.W."/>
            <person name="Olinger L."/>
            <person name="Grimwood J."/>
            <person name="Davis R.W."/>
            <person name="Stephens R.S."/>
        </authorList>
    </citation>
    <scope>NUCLEOTIDE SEQUENCE [LARGE SCALE GENOMIC DNA]</scope>
    <source>
        <strain>CWL029</strain>
    </source>
</reference>
<reference key="2">
    <citation type="journal article" date="2000" name="Nucleic Acids Res.">
        <title>Genome sequences of Chlamydia trachomatis MoPn and Chlamydia pneumoniae AR39.</title>
        <authorList>
            <person name="Read T.D."/>
            <person name="Brunham R.C."/>
            <person name="Shen C."/>
            <person name="Gill S.R."/>
            <person name="Heidelberg J.F."/>
            <person name="White O."/>
            <person name="Hickey E.K."/>
            <person name="Peterson J.D."/>
            <person name="Utterback T.R."/>
            <person name="Berry K.J."/>
            <person name="Bass S."/>
            <person name="Linher K.D."/>
            <person name="Weidman J.F."/>
            <person name="Khouri H.M."/>
            <person name="Craven B."/>
            <person name="Bowman C."/>
            <person name="Dodson R.J."/>
            <person name="Gwinn M.L."/>
            <person name="Nelson W.C."/>
            <person name="DeBoy R.T."/>
            <person name="Kolonay J.F."/>
            <person name="McClarty G."/>
            <person name="Salzberg S.L."/>
            <person name="Eisen J.A."/>
            <person name="Fraser C.M."/>
        </authorList>
    </citation>
    <scope>NUCLEOTIDE SEQUENCE [LARGE SCALE GENOMIC DNA]</scope>
    <source>
        <strain>AR39</strain>
    </source>
</reference>
<reference key="3">
    <citation type="journal article" date="2000" name="Nucleic Acids Res.">
        <title>Comparison of whole genome sequences of Chlamydia pneumoniae J138 from Japan and CWL029 from USA.</title>
        <authorList>
            <person name="Shirai M."/>
            <person name="Hirakawa H."/>
            <person name="Kimoto M."/>
            <person name="Tabuchi M."/>
            <person name="Kishi F."/>
            <person name="Ouchi K."/>
            <person name="Shiba T."/>
            <person name="Ishii K."/>
            <person name="Hattori M."/>
            <person name="Kuhara S."/>
            <person name="Nakazawa T."/>
        </authorList>
    </citation>
    <scope>NUCLEOTIDE SEQUENCE [LARGE SCALE GENOMIC DNA]</scope>
    <source>
        <strain>J138</strain>
    </source>
</reference>
<reference key="4">
    <citation type="submission" date="2002-05" db="EMBL/GenBank/DDBJ databases">
        <title>The genome sequence of Chlamydia pneumoniae TW183 and comparison with other Chlamydia strains based on whole genome sequence analysis.</title>
        <authorList>
            <person name="Geng M.M."/>
            <person name="Schuhmacher A."/>
            <person name="Muehldorfer I."/>
            <person name="Bensch K.W."/>
            <person name="Schaefer K.P."/>
            <person name="Schneider S."/>
            <person name="Pohl T."/>
            <person name="Essig A."/>
            <person name="Marre R."/>
            <person name="Melchers K."/>
        </authorList>
    </citation>
    <scope>NUCLEOTIDE SEQUENCE [LARGE SCALE GENOMIC DNA]</scope>
    <source>
        <strain>TW-183</strain>
    </source>
</reference>
<comment type="function">
    <text evidence="1">Excises uracil residues from the DNA which can arise as a result of misincorporation of dUMP residues by DNA polymerase or due to deamination of cytosine.</text>
</comment>
<comment type="catalytic activity">
    <reaction>
        <text>Hydrolyzes single-stranded DNA or mismatched double-stranded DNA and polynucleotides, releasing free uracil.</text>
        <dbReference type="EC" id="3.2.2.27"/>
    </reaction>
</comment>
<comment type="subcellular location">
    <subcellularLocation>
        <location evidence="1">Cytoplasm</location>
    </subcellularLocation>
</comment>
<comment type="similarity">
    <text evidence="2">Belongs to the uracil-DNA glycosylase (UDG) superfamily. UNG family.</text>
</comment>
<sequence>MQNATIDQLPVSWQEQLPLCWREQLKEEWSKPYMQQLLIFLKQEYKEHTVYPEENCVFSALRSTPFDQVRVVILGQDPYPGKGQAHGLSFSVPEGQRLPPSLINIFRELKTDLGIENHKGCLQSWANQGILLLNTVLTVRAGEPFSHAGKGWELFTDAIVTKLIQERTHIIFVLWGAAARKKCELLFNSKHQHAVLSSPHPSPLAAHRGFFGCSHFSKINYLLNKLNKPMINWKLP</sequence>
<name>UNG_CHLPN</name>
<dbReference type="EC" id="3.2.2.27"/>
<dbReference type="EMBL" id="AE001363">
    <property type="protein sequence ID" value="AAD18911.1"/>
    <property type="molecule type" value="Genomic_DNA"/>
</dbReference>
<dbReference type="EMBL" id="AE002161">
    <property type="protein sequence ID" value="AAF38868.1"/>
    <property type="molecule type" value="Genomic_DNA"/>
</dbReference>
<dbReference type="EMBL" id="BA000008">
    <property type="protein sequence ID" value="BAA98981.1"/>
    <property type="molecule type" value="Genomic_DNA"/>
</dbReference>
<dbReference type="EMBL" id="AE009440">
    <property type="protein sequence ID" value="AAP98730.1"/>
    <property type="molecule type" value="Genomic_DNA"/>
</dbReference>
<dbReference type="PIR" id="C86587">
    <property type="entry name" value="C86587"/>
</dbReference>
<dbReference type="PIR" id="H72035">
    <property type="entry name" value="H72035"/>
</dbReference>
<dbReference type="RefSeq" id="NP_224968.1">
    <property type="nucleotide sequence ID" value="NC_000922.1"/>
</dbReference>
<dbReference type="RefSeq" id="WP_010883410.1">
    <property type="nucleotide sequence ID" value="NZ_LN847257.1"/>
</dbReference>
<dbReference type="SMR" id="Q9Z7D3"/>
<dbReference type="STRING" id="406984.CPK_ORF00179"/>
<dbReference type="GeneID" id="45050828"/>
<dbReference type="KEGG" id="cpa:CP_1099"/>
<dbReference type="KEGG" id="cpj:ung"/>
<dbReference type="KEGG" id="cpn:CPn_0773"/>
<dbReference type="KEGG" id="cpt:CpB0801"/>
<dbReference type="PATRIC" id="fig|115713.3.peg.850"/>
<dbReference type="eggNOG" id="COG0692">
    <property type="taxonomic scope" value="Bacteria"/>
</dbReference>
<dbReference type="HOGENOM" id="CLU_032162_3_0_0"/>
<dbReference type="OrthoDB" id="9804372at2"/>
<dbReference type="BRENDA" id="3.2.2.27">
    <property type="organism ID" value="1311"/>
</dbReference>
<dbReference type="Proteomes" id="UP000000583">
    <property type="component" value="Chromosome"/>
</dbReference>
<dbReference type="Proteomes" id="UP000000801">
    <property type="component" value="Chromosome"/>
</dbReference>
<dbReference type="GO" id="GO:0005737">
    <property type="term" value="C:cytoplasm"/>
    <property type="evidence" value="ECO:0007669"/>
    <property type="project" value="UniProtKB-SubCell"/>
</dbReference>
<dbReference type="GO" id="GO:0004844">
    <property type="term" value="F:uracil DNA N-glycosylase activity"/>
    <property type="evidence" value="ECO:0007669"/>
    <property type="project" value="UniProtKB-UniRule"/>
</dbReference>
<dbReference type="GO" id="GO:0097510">
    <property type="term" value="P:base-excision repair, AP site formation via deaminated base removal"/>
    <property type="evidence" value="ECO:0007669"/>
    <property type="project" value="TreeGrafter"/>
</dbReference>
<dbReference type="CDD" id="cd10027">
    <property type="entry name" value="UDG-F1-like"/>
    <property type="match status" value="1"/>
</dbReference>
<dbReference type="FunFam" id="3.40.470.10:FF:000008">
    <property type="entry name" value="Uracil-DNA glycosylase"/>
    <property type="match status" value="1"/>
</dbReference>
<dbReference type="Gene3D" id="3.40.470.10">
    <property type="entry name" value="Uracil-DNA glycosylase-like domain"/>
    <property type="match status" value="1"/>
</dbReference>
<dbReference type="HAMAP" id="MF_00148">
    <property type="entry name" value="UDG"/>
    <property type="match status" value="1"/>
</dbReference>
<dbReference type="InterPro" id="IPR002043">
    <property type="entry name" value="UDG_fam1"/>
</dbReference>
<dbReference type="InterPro" id="IPR018085">
    <property type="entry name" value="Ura-DNA_Glyclase_AS"/>
</dbReference>
<dbReference type="InterPro" id="IPR005122">
    <property type="entry name" value="Uracil-DNA_glycosylase-like"/>
</dbReference>
<dbReference type="InterPro" id="IPR036895">
    <property type="entry name" value="Uracil-DNA_glycosylase-like_sf"/>
</dbReference>
<dbReference type="NCBIfam" id="NF003588">
    <property type="entry name" value="PRK05254.1-1"/>
    <property type="match status" value="1"/>
</dbReference>
<dbReference type="NCBIfam" id="NF003589">
    <property type="entry name" value="PRK05254.1-2"/>
    <property type="match status" value="1"/>
</dbReference>
<dbReference type="NCBIfam" id="NF003591">
    <property type="entry name" value="PRK05254.1-4"/>
    <property type="match status" value="1"/>
</dbReference>
<dbReference type="NCBIfam" id="NF003592">
    <property type="entry name" value="PRK05254.1-5"/>
    <property type="match status" value="1"/>
</dbReference>
<dbReference type="NCBIfam" id="TIGR00628">
    <property type="entry name" value="ung"/>
    <property type="match status" value="1"/>
</dbReference>
<dbReference type="PANTHER" id="PTHR11264">
    <property type="entry name" value="URACIL-DNA GLYCOSYLASE"/>
    <property type="match status" value="1"/>
</dbReference>
<dbReference type="PANTHER" id="PTHR11264:SF0">
    <property type="entry name" value="URACIL-DNA GLYCOSYLASE"/>
    <property type="match status" value="1"/>
</dbReference>
<dbReference type="Pfam" id="PF03167">
    <property type="entry name" value="UDG"/>
    <property type="match status" value="1"/>
</dbReference>
<dbReference type="SMART" id="SM00986">
    <property type="entry name" value="UDG"/>
    <property type="match status" value="1"/>
</dbReference>
<dbReference type="SMART" id="SM00987">
    <property type="entry name" value="UreE_C"/>
    <property type="match status" value="1"/>
</dbReference>
<dbReference type="SUPFAM" id="SSF52141">
    <property type="entry name" value="Uracil-DNA glycosylase-like"/>
    <property type="match status" value="1"/>
</dbReference>
<dbReference type="PROSITE" id="PS00130">
    <property type="entry name" value="U_DNA_GLYCOSYLASE"/>
    <property type="match status" value="1"/>
</dbReference>
<organism>
    <name type="scientific">Chlamydia pneumoniae</name>
    <name type="common">Chlamydophila pneumoniae</name>
    <dbReference type="NCBI Taxonomy" id="83558"/>
    <lineage>
        <taxon>Bacteria</taxon>
        <taxon>Pseudomonadati</taxon>
        <taxon>Chlamydiota</taxon>
        <taxon>Chlamydiia</taxon>
        <taxon>Chlamydiales</taxon>
        <taxon>Chlamydiaceae</taxon>
        <taxon>Chlamydia/Chlamydophila group</taxon>
        <taxon>Chlamydia</taxon>
    </lineage>
</organism>
<protein>
    <recommendedName>
        <fullName>Uracil-DNA glycosylase</fullName>
        <shortName>UDG</shortName>
        <ecNumber>3.2.2.27</ecNumber>
    </recommendedName>
</protein>
<feature type="chain" id="PRO_0000176083" description="Uracil-DNA glycosylase">
    <location>
        <begin position="1"/>
        <end position="236"/>
    </location>
</feature>
<feature type="active site" description="Proton acceptor" evidence="1">
    <location>
        <position position="77"/>
    </location>
</feature>